<name>HUNB_BOMMO</name>
<organism>
    <name type="scientific">Bombyx mori</name>
    <name type="common">Silk moth</name>
    <dbReference type="NCBI Taxonomy" id="7091"/>
    <lineage>
        <taxon>Eukaryota</taxon>
        <taxon>Metazoa</taxon>
        <taxon>Ecdysozoa</taxon>
        <taxon>Arthropoda</taxon>
        <taxon>Hexapoda</taxon>
        <taxon>Insecta</taxon>
        <taxon>Pterygota</taxon>
        <taxon>Neoptera</taxon>
        <taxon>Endopterygota</taxon>
        <taxon>Lepidoptera</taxon>
        <taxon>Glossata</taxon>
        <taxon>Ditrysia</taxon>
        <taxon>Bombycoidea</taxon>
        <taxon>Bombycidae</taxon>
        <taxon>Bombycinae</taxon>
        <taxon>Bombyx</taxon>
    </lineage>
</organism>
<dbReference type="EMBL" id="D38487">
    <property type="protein sequence ID" value="BAA22892.1"/>
    <property type="molecule type" value="mRNA"/>
</dbReference>
<dbReference type="SMR" id="O18326"/>
<dbReference type="FunCoup" id="O18326">
    <property type="interactions" value="60"/>
</dbReference>
<dbReference type="STRING" id="7091.O18326"/>
<dbReference type="PaxDb" id="7091-BGIBMGA003334-TA"/>
<dbReference type="eggNOG" id="KOG1721">
    <property type="taxonomic scope" value="Eukaryota"/>
</dbReference>
<dbReference type="InParanoid" id="O18326"/>
<dbReference type="OrthoDB" id="10015593at2759"/>
<dbReference type="Proteomes" id="UP000005204">
    <property type="component" value="Unassembled WGS sequence"/>
</dbReference>
<dbReference type="GO" id="GO:0005634">
    <property type="term" value="C:nucleus"/>
    <property type="evidence" value="ECO:0007669"/>
    <property type="project" value="UniProtKB-SubCell"/>
</dbReference>
<dbReference type="GO" id="GO:0003677">
    <property type="term" value="F:DNA binding"/>
    <property type="evidence" value="ECO:0007669"/>
    <property type="project" value="UniProtKB-KW"/>
</dbReference>
<dbReference type="GO" id="GO:0008270">
    <property type="term" value="F:zinc ion binding"/>
    <property type="evidence" value="ECO:0007669"/>
    <property type="project" value="UniProtKB-KW"/>
</dbReference>
<dbReference type="GO" id="GO:0035282">
    <property type="term" value="P:segmentation"/>
    <property type="evidence" value="ECO:0007669"/>
    <property type="project" value="UniProtKB-KW"/>
</dbReference>
<dbReference type="FunFam" id="3.30.160.60:FF:001301">
    <property type="entry name" value="Blast:Protein hunchback"/>
    <property type="match status" value="1"/>
</dbReference>
<dbReference type="FunFam" id="3.30.160.60:FF:001482">
    <property type="entry name" value="Hunchback"/>
    <property type="match status" value="1"/>
</dbReference>
<dbReference type="Gene3D" id="3.30.160.60">
    <property type="entry name" value="Classic Zinc Finger"/>
    <property type="match status" value="2"/>
</dbReference>
<dbReference type="InterPro" id="IPR036236">
    <property type="entry name" value="Znf_C2H2_sf"/>
</dbReference>
<dbReference type="InterPro" id="IPR013087">
    <property type="entry name" value="Znf_C2H2_type"/>
</dbReference>
<dbReference type="PANTHER" id="PTHR24392:SF49">
    <property type="entry name" value="PROTEIN HUNCHBACK"/>
    <property type="match status" value="1"/>
</dbReference>
<dbReference type="PANTHER" id="PTHR24392">
    <property type="entry name" value="ZINC FINGER PROTEIN"/>
    <property type="match status" value="1"/>
</dbReference>
<dbReference type="Pfam" id="PF00096">
    <property type="entry name" value="zf-C2H2"/>
    <property type="match status" value="1"/>
</dbReference>
<dbReference type="SMART" id="SM00355">
    <property type="entry name" value="ZnF_C2H2"/>
    <property type="match status" value="4"/>
</dbReference>
<dbReference type="SUPFAM" id="SSF57667">
    <property type="entry name" value="beta-beta-alpha zinc fingers"/>
    <property type="match status" value="2"/>
</dbReference>
<dbReference type="PROSITE" id="PS00028">
    <property type="entry name" value="ZINC_FINGER_C2H2_1"/>
    <property type="match status" value="1"/>
</dbReference>
<dbReference type="PROSITE" id="PS50157">
    <property type="entry name" value="ZINC_FINGER_C2H2_2"/>
    <property type="match status" value="2"/>
</dbReference>
<gene>
    <name type="primary">hb</name>
</gene>
<proteinExistence type="evidence at transcript level"/>
<sequence length="385" mass="42749">IGGIPAANAKCASHAGMTPAPHSSHPQAWGPLLQPPTVKTEPMDDGNFSKEQTSGFYSEGFHSASPSSSSKDSNGHSPRSSGSTREPSPFYDAMPLKAKANLGMHLDSFRNSLPYSLLTPPGFESRASDARDHSPSYESYSPRTLAPPAHVSHPLGRSDATPPKSPPRTPSSPERRSFDRFHDSGFDGVDHNKHDGDDGREGSGLEDDFDEEPGLRVPAVNSHGKVKTFKCKQCEFVAVTKLSFWEHSKEHIKPEKMLCCRKCPFVTEYKHHLEYHMRNHMGSKPFQCSQCSYSCVNKSMLNSHLKSHSNVYQYRCADCNYATKYCDSLKLHLRKYQHNPAMVLNLDGTPNPLPIIDVYGTRRGPKQKPLSKIFEQQTGTNNHSP</sequence>
<keyword id="KW-0217">Developmental protein</keyword>
<keyword id="KW-0238">DNA-binding</keyword>
<keyword id="KW-0302">Gap protein</keyword>
<keyword id="KW-0479">Metal-binding</keyword>
<keyword id="KW-0539">Nucleus</keyword>
<keyword id="KW-1185">Reference proteome</keyword>
<keyword id="KW-0677">Repeat</keyword>
<keyword id="KW-0862">Zinc</keyword>
<keyword id="KW-0863">Zinc-finger</keyword>
<feature type="chain" id="PRO_0000046970" description="Protein hunchback">
    <location>
        <begin position="1" status="less than"/>
        <end position="385" status="greater than"/>
    </location>
</feature>
<feature type="zinc finger region" description="C2H2-type 1" evidence="2">
    <location>
        <begin position="229"/>
        <end position="251"/>
    </location>
</feature>
<feature type="zinc finger region" description="C2H2-type 2" evidence="2">
    <location>
        <begin position="258"/>
        <end position="280"/>
    </location>
</feature>
<feature type="zinc finger region" description="C2H2-type 3" evidence="2">
    <location>
        <begin position="286"/>
        <end position="308"/>
    </location>
</feature>
<feature type="zinc finger region" description="C2H2-type 4" evidence="2">
    <location>
        <begin position="314"/>
        <end position="338"/>
    </location>
</feature>
<feature type="region of interest" description="Disordered" evidence="3">
    <location>
        <begin position="1"/>
        <end position="94"/>
    </location>
</feature>
<feature type="region of interest" description="Disordered" evidence="3">
    <location>
        <begin position="124"/>
        <end position="216"/>
    </location>
</feature>
<feature type="region of interest" description="Disordered" evidence="3">
    <location>
        <begin position="361"/>
        <end position="385"/>
    </location>
</feature>
<feature type="compositionally biased region" description="Low complexity" evidence="3">
    <location>
        <begin position="63"/>
        <end position="77"/>
    </location>
</feature>
<feature type="compositionally biased region" description="Basic and acidic residues" evidence="3">
    <location>
        <begin position="126"/>
        <end position="135"/>
    </location>
</feature>
<feature type="compositionally biased region" description="Basic and acidic residues" evidence="3">
    <location>
        <begin position="173"/>
        <end position="203"/>
    </location>
</feature>
<feature type="compositionally biased region" description="Polar residues" evidence="3">
    <location>
        <begin position="374"/>
        <end position="385"/>
    </location>
</feature>
<feature type="non-terminal residue">
    <location>
        <position position="1"/>
    </location>
</feature>
<feature type="non-terminal residue">
    <location>
        <position position="385"/>
    </location>
</feature>
<accession>O18326</accession>
<evidence type="ECO:0000250" key="1"/>
<evidence type="ECO:0000255" key="2">
    <source>
        <dbReference type="PROSITE-ProRule" id="PRU00042"/>
    </source>
</evidence>
<evidence type="ECO:0000256" key="3">
    <source>
        <dbReference type="SAM" id="MobiDB-lite"/>
    </source>
</evidence>
<evidence type="ECO:0000305" key="4"/>
<comment type="function">
    <text evidence="1">Gap class segmentation protein that controls development of head structures.</text>
</comment>
<comment type="subcellular location">
    <subcellularLocation>
        <location evidence="4">Nucleus</location>
    </subcellularLocation>
</comment>
<comment type="similarity">
    <text evidence="4">Belongs to the hunchback C2H2-type zinc-finger protein family.</text>
</comment>
<protein>
    <recommendedName>
        <fullName>Protein hunchback</fullName>
    </recommendedName>
</protein>
<reference key="1">
    <citation type="journal article" date="1997" name="Dev. Growth Differ.">
        <title>Double-segment defining role of even-skipped homologs along the evolution of insect pattern formation.</title>
        <authorList>
            <person name="Xu X."/>
            <person name="Xu P."/>
            <person name="Amanai K."/>
            <person name="Suzuki Y."/>
        </authorList>
    </citation>
    <scope>NUCLEOTIDE SEQUENCE [MRNA]</scope>
    <source>
        <strain>Kinshu X Showa</strain>
    </source>
</reference>